<comment type="function">
    <text>Golgi membrane protein involved in vesicular trafficking and spindle migration.</text>
</comment>
<comment type="subcellular location">
    <subcellularLocation>
        <location>Golgi apparatus membrane</location>
        <topology>Multi-pass membrane protein</topology>
    </subcellularLocation>
</comment>
<comment type="domain">
    <text evidence="1">The VTT domain was previously called the SNARE-assoc domain. As there is no evidence that this domain associates with SNARE proteins, it was renamed as VMP1, TMEM41, and TVP38 (VTT) domain.</text>
</comment>
<comment type="similarity">
    <text evidence="4">Belongs to the TVP38/TMEM64 family.</text>
</comment>
<gene>
    <name type="primary">tvp38</name>
    <name type="ORF">AN3579</name>
</gene>
<protein>
    <recommendedName>
        <fullName>Golgi apparatus membrane protein tvp38</fullName>
    </recommendedName>
</protein>
<sequence>MPADYASTARALSVSTTSSRSPSPGEGARPLWSQGATDTRTNAGFAARRSTPIPKQGIMARINAFNERSLALWRKMTFWQKVGSVLAVLSLNILGFGFLYITGRVFQWLGPVAEKWEHSVPVFIVMWLGVFFVSFPPLVGWSTFGTVSGFIFGVWKGWLLYASATVLGSICSFIASRTVLSKFVHRLVERDKRFAALALTLKYDGLKLLCMIRLCPLPYSICNGAISTFPTVQPLMYGLATAIISPKLLVPAFIGSRIRILNEKGEEMSLGSKLINIFSIIVSIAAGIFTGWYIYRRTLARAQELEEREREDIRHSLEADHAAHRPQRAFSDDPIVNAAATTLARDEEERIGFNDFDDDNVDLVIDDDDLSSRRSKSPYKDEFTDNESDVFRDGDGTNTDTYTLHTHVRH</sequence>
<reference key="1">
    <citation type="journal article" date="2005" name="Nature">
        <title>Sequencing of Aspergillus nidulans and comparative analysis with A. fumigatus and A. oryzae.</title>
        <authorList>
            <person name="Galagan J.E."/>
            <person name="Calvo S.E."/>
            <person name="Cuomo C."/>
            <person name="Ma L.-J."/>
            <person name="Wortman J.R."/>
            <person name="Batzoglou S."/>
            <person name="Lee S.-I."/>
            <person name="Bastuerkmen M."/>
            <person name="Spevak C.C."/>
            <person name="Clutterbuck J."/>
            <person name="Kapitonov V."/>
            <person name="Jurka J."/>
            <person name="Scazzocchio C."/>
            <person name="Farman M.L."/>
            <person name="Butler J."/>
            <person name="Purcell S."/>
            <person name="Harris S."/>
            <person name="Braus G.H."/>
            <person name="Draht O."/>
            <person name="Busch S."/>
            <person name="D'Enfert C."/>
            <person name="Bouchier C."/>
            <person name="Goldman G.H."/>
            <person name="Bell-Pedersen D."/>
            <person name="Griffiths-Jones S."/>
            <person name="Doonan J.H."/>
            <person name="Yu J."/>
            <person name="Vienken K."/>
            <person name="Pain A."/>
            <person name="Freitag M."/>
            <person name="Selker E.U."/>
            <person name="Archer D.B."/>
            <person name="Penalva M.A."/>
            <person name="Oakley B.R."/>
            <person name="Momany M."/>
            <person name="Tanaka T."/>
            <person name="Kumagai T."/>
            <person name="Asai K."/>
            <person name="Machida M."/>
            <person name="Nierman W.C."/>
            <person name="Denning D.W."/>
            <person name="Caddick M.X."/>
            <person name="Hynes M."/>
            <person name="Paoletti M."/>
            <person name="Fischer R."/>
            <person name="Miller B.L."/>
            <person name="Dyer P.S."/>
            <person name="Sachs M.S."/>
            <person name="Osmani S.A."/>
            <person name="Birren B.W."/>
        </authorList>
    </citation>
    <scope>NUCLEOTIDE SEQUENCE [LARGE SCALE GENOMIC DNA]</scope>
    <source>
        <strain>FGSC A4 / ATCC 38163 / CBS 112.46 / NRRL 194 / M139</strain>
    </source>
</reference>
<reference key="2">
    <citation type="journal article" date="2009" name="Fungal Genet. Biol.">
        <title>The 2008 update of the Aspergillus nidulans genome annotation: a community effort.</title>
        <authorList>
            <person name="Wortman J.R."/>
            <person name="Gilsenan J.M."/>
            <person name="Joardar V."/>
            <person name="Deegan J."/>
            <person name="Clutterbuck J."/>
            <person name="Andersen M.R."/>
            <person name="Archer D."/>
            <person name="Bencina M."/>
            <person name="Braus G."/>
            <person name="Coutinho P."/>
            <person name="von Dohren H."/>
            <person name="Doonan J."/>
            <person name="Driessen A.J."/>
            <person name="Durek P."/>
            <person name="Espeso E."/>
            <person name="Fekete E."/>
            <person name="Flipphi M."/>
            <person name="Estrada C.G."/>
            <person name="Geysens S."/>
            <person name="Goldman G."/>
            <person name="de Groot P.W."/>
            <person name="Hansen K."/>
            <person name="Harris S.D."/>
            <person name="Heinekamp T."/>
            <person name="Helmstaedt K."/>
            <person name="Henrissat B."/>
            <person name="Hofmann G."/>
            <person name="Homan T."/>
            <person name="Horio T."/>
            <person name="Horiuchi H."/>
            <person name="James S."/>
            <person name="Jones M."/>
            <person name="Karaffa L."/>
            <person name="Karanyi Z."/>
            <person name="Kato M."/>
            <person name="Keller N."/>
            <person name="Kelly D.E."/>
            <person name="Kiel J.A."/>
            <person name="Kim J.M."/>
            <person name="van der Klei I.J."/>
            <person name="Klis F.M."/>
            <person name="Kovalchuk A."/>
            <person name="Krasevec N."/>
            <person name="Kubicek C.P."/>
            <person name="Liu B."/>
            <person name="Maccabe A."/>
            <person name="Meyer V."/>
            <person name="Mirabito P."/>
            <person name="Miskei M."/>
            <person name="Mos M."/>
            <person name="Mullins J."/>
            <person name="Nelson D.R."/>
            <person name="Nielsen J."/>
            <person name="Oakley B.R."/>
            <person name="Osmani S.A."/>
            <person name="Pakula T."/>
            <person name="Paszewski A."/>
            <person name="Paulsen I."/>
            <person name="Pilsyk S."/>
            <person name="Pocsi I."/>
            <person name="Punt P.J."/>
            <person name="Ram A.F."/>
            <person name="Ren Q."/>
            <person name="Robellet X."/>
            <person name="Robson G."/>
            <person name="Seiboth B."/>
            <person name="van Solingen P."/>
            <person name="Specht T."/>
            <person name="Sun J."/>
            <person name="Taheri-Talesh N."/>
            <person name="Takeshita N."/>
            <person name="Ussery D."/>
            <person name="vanKuyk P.A."/>
            <person name="Visser H."/>
            <person name="van de Vondervoort P.J."/>
            <person name="de Vries R.P."/>
            <person name="Walton J."/>
            <person name="Xiang X."/>
            <person name="Xiong Y."/>
            <person name="Zeng A.P."/>
            <person name="Brandt B.W."/>
            <person name="Cornell M.J."/>
            <person name="van den Hondel C.A."/>
            <person name="Visser J."/>
            <person name="Oliver S.G."/>
            <person name="Turner G."/>
        </authorList>
    </citation>
    <scope>GENOME REANNOTATION</scope>
    <source>
        <strain>FGSC A4 / ATCC 38163 / CBS 112.46 / NRRL 194 / M139</strain>
    </source>
</reference>
<organism>
    <name type="scientific">Emericella nidulans (strain FGSC A4 / ATCC 38163 / CBS 112.46 / NRRL 194 / M139)</name>
    <name type="common">Aspergillus nidulans</name>
    <dbReference type="NCBI Taxonomy" id="227321"/>
    <lineage>
        <taxon>Eukaryota</taxon>
        <taxon>Fungi</taxon>
        <taxon>Dikarya</taxon>
        <taxon>Ascomycota</taxon>
        <taxon>Pezizomycotina</taxon>
        <taxon>Eurotiomycetes</taxon>
        <taxon>Eurotiomycetidae</taxon>
        <taxon>Eurotiales</taxon>
        <taxon>Aspergillaceae</taxon>
        <taxon>Aspergillus</taxon>
        <taxon>Aspergillus subgen. Nidulantes</taxon>
    </lineage>
</organism>
<name>TVP38_EMENI</name>
<feature type="chain" id="PRO_0000343069" description="Golgi apparatus membrane protein tvp38">
    <location>
        <begin position="1"/>
        <end position="410"/>
    </location>
</feature>
<feature type="topological domain" description="Lumenal" evidence="2">
    <location>
        <begin position="1"/>
        <end position="81"/>
    </location>
</feature>
<feature type="transmembrane region" description="Helical" evidence="2">
    <location>
        <begin position="82"/>
        <end position="102"/>
    </location>
</feature>
<feature type="topological domain" description="Cytoplasmic" evidence="2">
    <location>
        <begin position="103"/>
        <end position="119"/>
    </location>
</feature>
<feature type="transmembrane region" description="Helical" evidence="2">
    <location>
        <begin position="120"/>
        <end position="140"/>
    </location>
</feature>
<feature type="topological domain" description="Lumenal" evidence="2">
    <location>
        <begin position="141"/>
        <end position="149"/>
    </location>
</feature>
<feature type="transmembrane region" description="Helical" evidence="2">
    <location>
        <begin position="150"/>
        <end position="170"/>
    </location>
</feature>
<feature type="topological domain" description="Cytoplasmic" evidence="2">
    <location>
        <begin position="171"/>
        <end position="234"/>
    </location>
</feature>
<feature type="transmembrane region" description="Helical" evidence="2">
    <location>
        <begin position="235"/>
        <end position="255"/>
    </location>
</feature>
<feature type="topological domain" description="Lumenal" evidence="2">
    <location>
        <begin position="256"/>
        <end position="273"/>
    </location>
</feature>
<feature type="transmembrane region" description="Helical" evidence="2">
    <location>
        <begin position="274"/>
        <end position="294"/>
    </location>
</feature>
<feature type="topological domain" description="Cytoplasmic" evidence="2">
    <location>
        <begin position="295"/>
        <end position="410"/>
    </location>
</feature>
<feature type="region of interest" description="Disordered" evidence="3">
    <location>
        <begin position="1"/>
        <end position="36"/>
    </location>
</feature>
<feature type="region of interest" description="VTT domain" evidence="1">
    <location>
        <begin position="149"/>
        <end position="258"/>
    </location>
</feature>
<feature type="region of interest" description="Disordered" evidence="3">
    <location>
        <begin position="373"/>
        <end position="410"/>
    </location>
</feature>
<feature type="compositionally biased region" description="Low complexity" evidence="3">
    <location>
        <begin position="1"/>
        <end position="24"/>
    </location>
</feature>
<feature type="compositionally biased region" description="Basic and acidic residues" evidence="3">
    <location>
        <begin position="378"/>
        <end position="395"/>
    </location>
</feature>
<dbReference type="EMBL" id="AACD01000061">
    <property type="protein sequence ID" value="EAA59787.1"/>
    <property type="molecule type" value="Genomic_DNA"/>
</dbReference>
<dbReference type="EMBL" id="BN001302">
    <property type="protein sequence ID" value="CBF75845.1"/>
    <property type="molecule type" value="Genomic_DNA"/>
</dbReference>
<dbReference type="RefSeq" id="XP_661183.1">
    <property type="nucleotide sequence ID" value="XM_656091.1"/>
</dbReference>
<dbReference type="FunCoup" id="Q5B7A1">
    <property type="interactions" value="112"/>
</dbReference>
<dbReference type="STRING" id="227321.Q5B7A1"/>
<dbReference type="EnsemblFungi" id="CBF75845">
    <property type="protein sequence ID" value="CBF75845"/>
    <property type="gene ID" value="ANIA_03579"/>
</dbReference>
<dbReference type="KEGG" id="ani:ANIA_03579"/>
<dbReference type="VEuPathDB" id="FungiDB:AN3579"/>
<dbReference type="eggNOG" id="KOG3140">
    <property type="taxonomic scope" value="Eukaryota"/>
</dbReference>
<dbReference type="HOGENOM" id="CLU_041954_0_0_1"/>
<dbReference type="InParanoid" id="Q5B7A1"/>
<dbReference type="OMA" id="YHDEFTD"/>
<dbReference type="OrthoDB" id="166803at2759"/>
<dbReference type="Proteomes" id="UP000000560">
    <property type="component" value="Chromosome II"/>
</dbReference>
<dbReference type="GO" id="GO:0000139">
    <property type="term" value="C:Golgi membrane"/>
    <property type="evidence" value="ECO:0000318"/>
    <property type="project" value="GO_Central"/>
</dbReference>
<dbReference type="GO" id="GO:0000022">
    <property type="term" value="P:mitotic spindle elongation"/>
    <property type="evidence" value="ECO:0000318"/>
    <property type="project" value="GO_Central"/>
</dbReference>
<dbReference type="GO" id="GO:0016192">
    <property type="term" value="P:vesicle-mediated transport"/>
    <property type="evidence" value="ECO:0000318"/>
    <property type="project" value="GO_Central"/>
</dbReference>
<dbReference type="InterPro" id="IPR051076">
    <property type="entry name" value="Golgi_membrane_TVP38/TMEM64"/>
</dbReference>
<dbReference type="InterPro" id="IPR032816">
    <property type="entry name" value="VTT_dom"/>
</dbReference>
<dbReference type="PANTHER" id="PTHR47549:SF1">
    <property type="entry name" value="GOLGI APPARATUS MEMBRANE PROTEIN TVP38"/>
    <property type="match status" value="1"/>
</dbReference>
<dbReference type="PANTHER" id="PTHR47549">
    <property type="entry name" value="GOLGI APPARATUS MEMBRANE PROTEIN TVP38-RELATED"/>
    <property type="match status" value="1"/>
</dbReference>
<dbReference type="Pfam" id="PF09335">
    <property type="entry name" value="VTT_dom"/>
    <property type="match status" value="1"/>
</dbReference>
<keyword id="KW-0333">Golgi apparatus</keyword>
<keyword id="KW-0472">Membrane</keyword>
<keyword id="KW-1185">Reference proteome</keyword>
<keyword id="KW-0812">Transmembrane</keyword>
<keyword id="KW-1133">Transmembrane helix</keyword>
<accession>Q5B7A1</accession>
<accession>C8V4F0</accession>
<proteinExistence type="inferred from homology"/>
<evidence type="ECO:0000250" key="1">
    <source>
        <dbReference type="UniProtKB" id="P36164"/>
    </source>
</evidence>
<evidence type="ECO:0000255" key="2"/>
<evidence type="ECO:0000256" key="3">
    <source>
        <dbReference type="SAM" id="MobiDB-lite"/>
    </source>
</evidence>
<evidence type="ECO:0000305" key="4"/>